<protein>
    <recommendedName>
        <fullName>Transcriptional regulator HosA</fullName>
    </recommendedName>
</protein>
<feature type="chain" id="PRO_0000054356" description="Transcriptional regulator HosA">
    <location>
        <begin position="1"/>
        <end position="135"/>
    </location>
</feature>
<feature type="domain" description="HTH marR-type" evidence="2">
    <location>
        <begin position="4"/>
        <end position="134"/>
    </location>
</feature>
<feature type="DNA-binding region" description="H-T-H motif" evidence="2">
    <location>
        <begin position="48"/>
        <end position="71"/>
    </location>
</feature>
<sequence>MALRNKAFHQLRQLFQQHTARWQHELPDLTKPQYAVMRAIADKPGIEQVALIEAAVSTKATLAEMLARMENRGLVRREHDPADKRRRFVWLTAEGEKILAAAIPIGDSVDEEFLGRLSGEEQELFMQLVRKMMNA</sequence>
<dbReference type="EMBL" id="AF242208">
    <property type="protein sequence ID" value="AAG14974.1"/>
    <property type="molecule type" value="Genomic_DNA"/>
</dbReference>
<dbReference type="RefSeq" id="WP_001208070.1">
    <property type="nucleotide sequence ID" value="NZ_QMIB01000001.1"/>
</dbReference>
<dbReference type="SMR" id="Q9F8R8"/>
<dbReference type="OMA" id="WNTMVSE"/>
<dbReference type="GO" id="GO:0003677">
    <property type="term" value="F:DNA binding"/>
    <property type="evidence" value="ECO:0007669"/>
    <property type="project" value="UniProtKB-KW"/>
</dbReference>
<dbReference type="GO" id="GO:0003700">
    <property type="term" value="F:DNA-binding transcription factor activity"/>
    <property type="evidence" value="ECO:0007669"/>
    <property type="project" value="InterPro"/>
</dbReference>
<dbReference type="Gene3D" id="1.10.10.10">
    <property type="entry name" value="Winged helix-like DNA-binding domain superfamily/Winged helix DNA-binding domain"/>
    <property type="match status" value="1"/>
</dbReference>
<dbReference type="InterPro" id="IPR000835">
    <property type="entry name" value="HTH_MarR-typ"/>
</dbReference>
<dbReference type="InterPro" id="IPR023187">
    <property type="entry name" value="Tscrpt_reg_MarR-type_CS"/>
</dbReference>
<dbReference type="InterPro" id="IPR036388">
    <property type="entry name" value="WH-like_DNA-bd_sf"/>
</dbReference>
<dbReference type="InterPro" id="IPR036390">
    <property type="entry name" value="WH_DNA-bd_sf"/>
</dbReference>
<dbReference type="PANTHER" id="PTHR42756">
    <property type="entry name" value="TRANSCRIPTIONAL REGULATOR, MARR"/>
    <property type="match status" value="1"/>
</dbReference>
<dbReference type="PANTHER" id="PTHR42756:SF1">
    <property type="entry name" value="TRANSCRIPTIONAL REPRESSOR OF EMRAB OPERON"/>
    <property type="match status" value="1"/>
</dbReference>
<dbReference type="Pfam" id="PF01047">
    <property type="entry name" value="MarR"/>
    <property type="match status" value="1"/>
</dbReference>
<dbReference type="PRINTS" id="PR00598">
    <property type="entry name" value="HTHMARR"/>
</dbReference>
<dbReference type="SMART" id="SM00347">
    <property type="entry name" value="HTH_MARR"/>
    <property type="match status" value="1"/>
</dbReference>
<dbReference type="SUPFAM" id="SSF46785">
    <property type="entry name" value="Winged helix' DNA-binding domain"/>
    <property type="match status" value="1"/>
</dbReference>
<dbReference type="PROSITE" id="PS01117">
    <property type="entry name" value="HTH_MARR_1"/>
    <property type="match status" value="1"/>
</dbReference>
<dbReference type="PROSITE" id="PS50995">
    <property type="entry name" value="HTH_MARR_2"/>
    <property type="match status" value="1"/>
</dbReference>
<evidence type="ECO:0000250" key="1"/>
<evidence type="ECO:0000255" key="2">
    <source>
        <dbReference type="PROSITE-ProRule" id="PRU00345"/>
    </source>
</evidence>
<evidence type="ECO:0000305" key="3"/>
<organism>
    <name type="scientific">Escherichia coli O111:H-</name>
    <dbReference type="NCBI Taxonomy" id="168927"/>
    <lineage>
        <taxon>Bacteria</taxon>
        <taxon>Pseudomonadati</taxon>
        <taxon>Pseudomonadota</taxon>
        <taxon>Gammaproteobacteria</taxon>
        <taxon>Enterobacterales</taxon>
        <taxon>Enterobacteriaceae</taxon>
        <taxon>Escherichia</taxon>
    </lineage>
</organism>
<comment type="function">
    <text evidence="1">Involved in the temperature-dependent positive control of flagellum-driven swimming motility and cellular aggregation. Regulates fliC expression by directly interacting with fliC promoter (By similarity).</text>
</comment>
<comment type="caution">
    <text evidence="3">Originally described as slyA, but then it was found that two distinct genes had been named slyA. This gene was renamed hosA.</text>
</comment>
<proteinExistence type="inferred from homology"/>
<reference key="1">
    <citation type="journal article" date="2000" name="J. Bacteriol.">
        <title>Gene conservation and loss in the mutS-rpoS genomic region of pathogenic Escherichia coli.</title>
        <authorList>
            <person name="Herbelin C.J."/>
            <person name="Chirillo S.C."/>
            <person name="Melnick K.A."/>
            <person name="Whittam T.S."/>
        </authorList>
    </citation>
    <scope>NUCLEOTIDE SEQUENCE [GENOMIC DNA]</scope>
    <source>
        <strain>O111:H- / DEC 12e / EPEC</strain>
    </source>
</reference>
<reference key="2">
    <citation type="journal article" date="2002" name="Trends Microbiol.">
        <title>Two different open reading frames named slyA in the E. coli sequence databases.</title>
        <authorList>
            <person name="Heroven A.K."/>
            <person name="Dersch P."/>
        </authorList>
    </citation>
    <scope>NOMENCLATURE</scope>
</reference>
<gene>
    <name type="primary">hosA</name>
</gene>
<keyword id="KW-0238">DNA-binding</keyword>
<keyword id="KW-0804">Transcription</keyword>
<keyword id="KW-0805">Transcription regulation</keyword>
<keyword id="KW-0843">Virulence</keyword>
<accession>Q9F8R8</accession>
<name>HOSA_ECO11</name>